<feature type="signal peptide" evidence="1">
    <location>
        <begin position="1"/>
        <end position="19"/>
    </location>
</feature>
<feature type="chain" id="PRO_0000417694" description="Outer membrane protein assembly factor BamB">
    <location>
        <begin position="20"/>
        <end position="393"/>
    </location>
</feature>
<feature type="lipid moiety-binding region" description="N-palmitoyl cysteine" evidence="1">
    <location>
        <position position="20"/>
    </location>
</feature>
<feature type="lipid moiety-binding region" description="S-diacylglycerol cysteine" evidence="1">
    <location>
        <position position="20"/>
    </location>
</feature>
<sequence length="393" mass="42092">MQLRKTLLVGLVSVALLSGCSLFNSEEDVVTMSPLPKVENQFSPTKVWSTSVGSGVGDYYSHLRPAWQGTSVFAADRKGLVKAMDADTGKQIWQTDLSEKTNFLSSNHSAMLSGGVTASGSHVYVGSEKAVVYALNAYDGQVAWQTVVAGEALSRPVVSDGVVLIHTSNGMLQALNESDGAIKWTLNLDTPALSLRGESAPAVAFGAAIVGGDNGRVSAVMMEQGQLIWQQRISQVTGATEIDRLNDIDITPVVVDGVVYALAYNGNLTALDLRSGQILWKREIGSVNDFIVDAGRIYLVDQNDRIIALKSDGGVTLWSQSDLLHRNLTAPVMYNGYLVVGDAEGYLHWVNTDDGRFVAQQSVDSSGFLSAPVVASDKLLIQARSGTVYAFTR</sequence>
<evidence type="ECO:0000255" key="1">
    <source>
        <dbReference type="HAMAP-Rule" id="MF_00923"/>
    </source>
</evidence>
<reference key="1">
    <citation type="journal article" date="2001" name="Nature">
        <title>Genome sequence of Yersinia pestis, the causative agent of plague.</title>
        <authorList>
            <person name="Parkhill J."/>
            <person name="Wren B.W."/>
            <person name="Thomson N.R."/>
            <person name="Titball R.W."/>
            <person name="Holden M.T.G."/>
            <person name="Prentice M.B."/>
            <person name="Sebaihia M."/>
            <person name="James K.D."/>
            <person name="Churcher C.M."/>
            <person name="Mungall K.L."/>
            <person name="Baker S."/>
            <person name="Basham D."/>
            <person name="Bentley S.D."/>
            <person name="Brooks K."/>
            <person name="Cerdeno-Tarraga A.-M."/>
            <person name="Chillingworth T."/>
            <person name="Cronin A."/>
            <person name="Davies R.M."/>
            <person name="Davis P."/>
            <person name="Dougan G."/>
            <person name="Feltwell T."/>
            <person name="Hamlin N."/>
            <person name="Holroyd S."/>
            <person name="Jagels K."/>
            <person name="Karlyshev A.V."/>
            <person name="Leather S."/>
            <person name="Moule S."/>
            <person name="Oyston P.C.F."/>
            <person name="Quail M.A."/>
            <person name="Rutherford K.M."/>
            <person name="Simmonds M."/>
            <person name="Skelton J."/>
            <person name="Stevens K."/>
            <person name="Whitehead S."/>
            <person name="Barrell B.G."/>
        </authorList>
    </citation>
    <scope>NUCLEOTIDE SEQUENCE [LARGE SCALE GENOMIC DNA]</scope>
    <source>
        <strain>CO-92 / Biovar Orientalis</strain>
    </source>
</reference>
<reference key="2">
    <citation type="journal article" date="2002" name="J. Bacteriol.">
        <title>Genome sequence of Yersinia pestis KIM.</title>
        <authorList>
            <person name="Deng W."/>
            <person name="Burland V."/>
            <person name="Plunkett G. III"/>
            <person name="Boutin A."/>
            <person name="Mayhew G.F."/>
            <person name="Liss P."/>
            <person name="Perna N.T."/>
            <person name="Rose D.J."/>
            <person name="Mau B."/>
            <person name="Zhou S."/>
            <person name="Schwartz D.C."/>
            <person name="Fetherston J.D."/>
            <person name="Lindler L.E."/>
            <person name="Brubaker R.R."/>
            <person name="Plano G.V."/>
            <person name="Straley S.C."/>
            <person name="McDonough K.A."/>
            <person name="Nilles M.L."/>
            <person name="Matson J.S."/>
            <person name="Blattner F.R."/>
            <person name="Perry R.D."/>
        </authorList>
    </citation>
    <scope>NUCLEOTIDE SEQUENCE [LARGE SCALE GENOMIC DNA]</scope>
    <source>
        <strain>KIM10+ / Biovar Mediaevalis</strain>
    </source>
</reference>
<reference key="3">
    <citation type="journal article" date="2004" name="DNA Res.">
        <title>Complete genome sequence of Yersinia pestis strain 91001, an isolate avirulent to humans.</title>
        <authorList>
            <person name="Song Y."/>
            <person name="Tong Z."/>
            <person name="Wang J."/>
            <person name="Wang L."/>
            <person name="Guo Z."/>
            <person name="Han Y."/>
            <person name="Zhang J."/>
            <person name="Pei D."/>
            <person name="Zhou D."/>
            <person name="Qin H."/>
            <person name="Pang X."/>
            <person name="Han Y."/>
            <person name="Zhai J."/>
            <person name="Li M."/>
            <person name="Cui B."/>
            <person name="Qi Z."/>
            <person name="Jin L."/>
            <person name="Dai R."/>
            <person name="Chen F."/>
            <person name="Li S."/>
            <person name="Ye C."/>
            <person name="Du Z."/>
            <person name="Lin W."/>
            <person name="Wang J."/>
            <person name="Yu J."/>
            <person name="Yang H."/>
            <person name="Wang J."/>
            <person name="Huang P."/>
            <person name="Yang R."/>
        </authorList>
    </citation>
    <scope>NUCLEOTIDE SEQUENCE [LARGE SCALE GENOMIC DNA]</scope>
    <source>
        <strain>91001 / Biovar Mediaevalis</strain>
    </source>
</reference>
<dbReference type="EMBL" id="AE009952">
    <property type="protein sequence ID" value="AAM84929.1"/>
    <property type="molecule type" value="Genomic_DNA"/>
</dbReference>
<dbReference type="EMBL" id="AE017042">
    <property type="protein sequence ID" value="AAS62930.1"/>
    <property type="molecule type" value="Genomic_DNA"/>
</dbReference>
<dbReference type="EMBL" id="AL590842">
    <property type="protein sequence ID" value="CAL21487.1"/>
    <property type="molecule type" value="Genomic_DNA"/>
</dbReference>
<dbReference type="PIR" id="AD0350">
    <property type="entry name" value="AD0350"/>
</dbReference>
<dbReference type="RefSeq" id="WP_002209814.1">
    <property type="nucleotide sequence ID" value="NZ_WUCM01000067.1"/>
</dbReference>
<dbReference type="RefSeq" id="YP_002347811.1">
    <property type="nucleotide sequence ID" value="NC_003143.1"/>
</dbReference>
<dbReference type="SMR" id="Q7CJM5"/>
<dbReference type="IntAct" id="Q7CJM5">
    <property type="interactions" value="2"/>
</dbReference>
<dbReference type="STRING" id="214092.YPO2876"/>
<dbReference type="PaxDb" id="214092-YPO2876"/>
<dbReference type="DNASU" id="1146303"/>
<dbReference type="EnsemblBacteria" id="AAS62930">
    <property type="protein sequence ID" value="AAS62930"/>
    <property type="gene ID" value="YP_2742"/>
</dbReference>
<dbReference type="GeneID" id="57975834"/>
<dbReference type="KEGG" id="ype:YPO2876"/>
<dbReference type="KEGG" id="ypk:y1356"/>
<dbReference type="KEGG" id="ypm:YP_2742"/>
<dbReference type="PATRIC" id="fig|214092.21.peg.3322"/>
<dbReference type="eggNOG" id="COG1520">
    <property type="taxonomic scope" value="Bacteria"/>
</dbReference>
<dbReference type="HOGENOM" id="CLU_027480_0_1_6"/>
<dbReference type="OMA" id="FTPTKVW"/>
<dbReference type="OrthoDB" id="5173551at2"/>
<dbReference type="Proteomes" id="UP000000815">
    <property type="component" value="Chromosome"/>
</dbReference>
<dbReference type="Proteomes" id="UP000001019">
    <property type="component" value="Chromosome"/>
</dbReference>
<dbReference type="Proteomes" id="UP000002490">
    <property type="component" value="Chromosome"/>
</dbReference>
<dbReference type="GO" id="GO:0009279">
    <property type="term" value="C:cell outer membrane"/>
    <property type="evidence" value="ECO:0007669"/>
    <property type="project" value="UniProtKB-SubCell"/>
</dbReference>
<dbReference type="GO" id="GO:0043165">
    <property type="term" value="P:Gram-negative-bacterium-type cell outer membrane assembly"/>
    <property type="evidence" value="ECO:0007669"/>
    <property type="project" value="UniProtKB-UniRule"/>
</dbReference>
<dbReference type="GO" id="GO:0051205">
    <property type="term" value="P:protein insertion into membrane"/>
    <property type="evidence" value="ECO:0007669"/>
    <property type="project" value="UniProtKB-UniRule"/>
</dbReference>
<dbReference type="CDD" id="cd10276">
    <property type="entry name" value="BamB_YfgL"/>
    <property type="match status" value="1"/>
</dbReference>
<dbReference type="Gene3D" id="2.130.10.10">
    <property type="entry name" value="YVTN repeat-like/Quinoprotein amine dehydrogenase"/>
    <property type="match status" value="1"/>
</dbReference>
<dbReference type="HAMAP" id="MF_00923">
    <property type="entry name" value="OM_assembly_BamB"/>
    <property type="match status" value="1"/>
</dbReference>
<dbReference type="InterPro" id="IPR017687">
    <property type="entry name" value="BamB"/>
</dbReference>
<dbReference type="InterPro" id="IPR018391">
    <property type="entry name" value="PQQ_b-propeller_rpt"/>
</dbReference>
<dbReference type="InterPro" id="IPR002372">
    <property type="entry name" value="PQQ_rpt_dom"/>
</dbReference>
<dbReference type="InterPro" id="IPR011047">
    <property type="entry name" value="Quinoprotein_ADH-like_sf"/>
</dbReference>
<dbReference type="InterPro" id="IPR015943">
    <property type="entry name" value="WD40/YVTN_repeat-like_dom_sf"/>
</dbReference>
<dbReference type="NCBIfam" id="TIGR03300">
    <property type="entry name" value="assembly_YfgL"/>
    <property type="match status" value="1"/>
</dbReference>
<dbReference type="NCBIfam" id="NF008351">
    <property type="entry name" value="PRK11138.1"/>
    <property type="match status" value="1"/>
</dbReference>
<dbReference type="PANTHER" id="PTHR34512">
    <property type="entry name" value="CELL SURFACE PROTEIN"/>
    <property type="match status" value="1"/>
</dbReference>
<dbReference type="PANTHER" id="PTHR34512:SF30">
    <property type="entry name" value="OUTER MEMBRANE PROTEIN ASSEMBLY FACTOR BAMB"/>
    <property type="match status" value="1"/>
</dbReference>
<dbReference type="Pfam" id="PF13360">
    <property type="entry name" value="PQQ_2"/>
    <property type="match status" value="1"/>
</dbReference>
<dbReference type="SMART" id="SM00564">
    <property type="entry name" value="PQQ"/>
    <property type="match status" value="7"/>
</dbReference>
<dbReference type="SUPFAM" id="SSF50998">
    <property type="entry name" value="Quinoprotein alcohol dehydrogenase-like"/>
    <property type="match status" value="1"/>
</dbReference>
<dbReference type="PROSITE" id="PS51257">
    <property type="entry name" value="PROKAR_LIPOPROTEIN"/>
    <property type="match status" value="1"/>
</dbReference>
<protein>
    <recommendedName>
        <fullName evidence="1">Outer membrane protein assembly factor BamB</fullName>
    </recommendedName>
</protein>
<gene>
    <name evidence="1" type="primary">bamB</name>
    <name type="ordered locus">YPO2876</name>
    <name type="ordered locus">y1356</name>
    <name type="ordered locus">YP_2742</name>
</gene>
<proteinExistence type="inferred from homology"/>
<organism>
    <name type="scientific">Yersinia pestis</name>
    <dbReference type="NCBI Taxonomy" id="632"/>
    <lineage>
        <taxon>Bacteria</taxon>
        <taxon>Pseudomonadati</taxon>
        <taxon>Pseudomonadota</taxon>
        <taxon>Gammaproteobacteria</taxon>
        <taxon>Enterobacterales</taxon>
        <taxon>Yersiniaceae</taxon>
        <taxon>Yersinia</taxon>
    </lineage>
</organism>
<keyword id="KW-0998">Cell outer membrane</keyword>
<keyword id="KW-0449">Lipoprotein</keyword>
<keyword id="KW-0472">Membrane</keyword>
<keyword id="KW-0564">Palmitate</keyword>
<keyword id="KW-1185">Reference proteome</keyword>
<keyword id="KW-0732">Signal</keyword>
<name>BAMB_YERPE</name>
<accession>Q7CJM5</accession>
<accession>Q74S85</accession>
<comment type="function">
    <text evidence="1">Part of the outer membrane protein assembly complex, which is involved in assembly and insertion of beta-barrel proteins into the outer membrane.</text>
</comment>
<comment type="subunit">
    <text evidence="1">Part of the Bam complex, which is composed of the outer membrane protein BamA, and four lipoproteins BamB, BamC, BamD and BamE.</text>
</comment>
<comment type="subcellular location">
    <subcellularLocation>
        <location evidence="1">Cell outer membrane</location>
        <topology evidence="1">Lipid-anchor</topology>
    </subcellularLocation>
</comment>
<comment type="similarity">
    <text evidence="1">Belongs to the BamB family.</text>
</comment>